<keyword id="KW-1185">Reference proteome</keyword>
<keyword id="KW-0814">Transposable element</keyword>
<name>YIS1_STRCO</name>
<feature type="chain" id="PRO_0000075519" description="Insertion element IS110 uncharacterized 43.6 kDa protein">
    <location>
        <begin position="1"/>
        <end position="405"/>
    </location>
</feature>
<proteinExistence type="predicted"/>
<reference key="1">
    <citation type="journal article" date="1987" name="Nucleic Acids Res.">
        <title>Nucleotide sequence of IS110, an insertion sequence of Streptomyces coelicolor A3(2).</title>
        <authorList>
            <person name="Bruton C.J."/>
            <person name="Chater K.F."/>
        </authorList>
    </citation>
    <scope>NUCLEOTIDE SEQUENCE [GENOMIC DNA]</scope>
    <source>
        <strain>A3(2) / NRRL B-16638</strain>
    </source>
</reference>
<reference key="2">
    <citation type="submission" date="1998-06" db="EMBL/GenBank/DDBJ databases">
        <authorList>
            <person name="Oliver K."/>
            <person name="Harris D."/>
            <person name="Parkhill J."/>
            <person name="Barrell B.G."/>
            <person name="Rajandream M.A."/>
        </authorList>
    </citation>
    <scope>NUCLEOTIDE SEQUENCE [GENOMIC DNA] (SC3C8.10)</scope>
    <source>
        <strain>A3(2) / NRRL B-16638</strain>
    </source>
</reference>
<reference key="3">
    <citation type="submission" date="2000-01" db="EMBL/GenBank/DDBJ databases">
        <authorList>
            <person name="Seeger K.J."/>
            <person name="Harris D."/>
            <person name="Thomson N.R."/>
            <person name="Parkhill J."/>
            <person name="Barrell B.G."/>
            <person name="Rajandream M.A."/>
        </authorList>
    </citation>
    <scope>NUCLEOTIDE SEQUENCE [GENOMIC DNA] (SCC57A.30C)</scope>
    <source>
        <strain>A3(2) / NRRL B-16638</strain>
    </source>
</reference>
<reference key="4">
    <citation type="journal article" date="2002" name="Nature">
        <title>Complete genome sequence of the model actinomycete Streptomyces coelicolor A3(2).</title>
        <authorList>
            <person name="Bentley S.D."/>
            <person name="Chater K.F."/>
            <person name="Cerdeno-Tarraga A.-M."/>
            <person name="Challis G.L."/>
            <person name="Thomson N.R."/>
            <person name="James K.D."/>
            <person name="Harris D.E."/>
            <person name="Quail M.A."/>
            <person name="Kieser H."/>
            <person name="Harper D."/>
            <person name="Bateman A."/>
            <person name="Brown S."/>
            <person name="Chandra G."/>
            <person name="Chen C.W."/>
            <person name="Collins M."/>
            <person name="Cronin A."/>
            <person name="Fraser A."/>
            <person name="Goble A."/>
            <person name="Hidalgo J."/>
            <person name="Hornsby T."/>
            <person name="Howarth S."/>
            <person name="Huang C.-H."/>
            <person name="Kieser T."/>
            <person name="Larke L."/>
            <person name="Murphy L.D."/>
            <person name="Oliver K."/>
            <person name="O'Neil S."/>
            <person name="Rabbinowitsch E."/>
            <person name="Rajandream M.A."/>
            <person name="Rutherford K.M."/>
            <person name="Rutter S."/>
            <person name="Seeger K."/>
            <person name="Saunders D."/>
            <person name="Sharp S."/>
            <person name="Squares R."/>
            <person name="Squares S."/>
            <person name="Taylor K."/>
            <person name="Warren T."/>
            <person name="Wietzorrek A."/>
            <person name="Woodward J.R."/>
            <person name="Barrell B.G."/>
            <person name="Parkhill J."/>
            <person name="Hopwood D.A."/>
        </authorList>
    </citation>
    <scope>NUCLEOTIDE SEQUENCE [LARGE SCALE GENOMIC DNA]</scope>
    <source>
        <strain>ATCC BAA-471 / A3(2) / M145</strain>
    </source>
</reference>
<dbReference type="EMBL" id="Y00434">
    <property type="protein sequence ID" value="CAB51528.1"/>
    <property type="molecule type" value="Genomic_DNA"/>
</dbReference>
<dbReference type="EMBL" id="AL939107">
    <property type="protein sequence ID" value="CAC14373.1"/>
    <property type="molecule type" value="Genomic_DNA"/>
</dbReference>
<dbReference type="EMBL" id="AL939113">
    <property type="protein sequence ID" value="CAB66298.1"/>
    <property type="molecule type" value="Genomic_DNA"/>
</dbReference>
<dbReference type="EMBL" id="AL939127">
    <property type="protein sequence ID" value="CAA19602.1"/>
    <property type="molecule type" value="Genomic_DNA"/>
</dbReference>
<dbReference type="EMBL" id="AL939132">
    <property type="protein sequence ID" value="CAC14510.1"/>
    <property type="molecule type" value="Genomic_DNA"/>
</dbReference>
<dbReference type="PIR" id="A26848">
    <property type="entry name" value="A26848"/>
</dbReference>
<dbReference type="RefSeq" id="NP_625301.1">
    <property type="nucleotide sequence ID" value="NC_003888.3"/>
</dbReference>
<dbReference type="RefSeq" id="NP_626990.1">
    <property type="nucleotide sequence ID" value="NC_003888.3"/>
</dbReference>
<dbReference type="RefSeq" id="NP_630482.1">
    <property type="nucleotide sequence ID" value="NC_003888.3"/>
</dbReference>
<dbReference type="RefSeq" id="NP_631813.1">
    <property type="nucleotide sequence ID" value="NC_003888.3"/>
</dbReference>
<dbReference type="RefSeq" id="WP_011027512.1">
    <property type="nucleotide sequence ID" value="NZ_VNID01000055.1"/>
</dbReference>
<dbReference type="SMR" id="P19780"/>
<dbReference type="STRING" id="100226.gene:17758588"/>
<dbReference type="PaxDb" id="100226-SCO1005"/>
<dbReference type="KEGG" id="sco:SCO1005"/>
<dbReference type="KEGG" id="sco:SCO2759"/>
<dbReference type="KEGG" id="sco:SCO6391"/>
<dbReference type="KEGG" id="sco:SCO7782"/>
<dbReference type="PATRIC" id="fig|100226.15.peg.1002"/>
<dbReference type="eggNOG" id="COG3547">
    <property type="taxonomic scope" value="Bacteria"/>
</dbReference>
<dbReference type="HOGENOM" id="CLU_036902_2_3_11"/>
<dbReference type="InParanoid" id="P19780"/>
<dbReference type="OrthoDB" id="3188901at2"/>
<dbReference type="PhylomeDB" id="P19780"/>
<dbReference type="Proteomes" id="UP000001973">
    <property type="component" value="Chromosome"/>
</dbReference>
<dbReference type="GO" id="GO:0003677">
    <property type="term" value="F:DNA binding"/>
    <property type="evidence" value="ECO:0007669"/>
    <property type="project" value="InterPro"/>
</dbReference>
<dbReference type="GO" id="GO:0004803">
    <property type="term" value="F:transposase activity"/>
    <property type="evidence" value="ECO:0007669"/>
    <property type="project" value="InterPro"/>
</dbReference>
<dbReference type="GO" id="GO:0006313">
    <property type="term" value="P:DNA transposition"/>
    <property type="evidence" value="ECO:0007669"/>
    <property type="project" value="InterPro"/>
</dbReference>
<dbReference type="InterPro" id="IPR002525">
    <property type="entry name" value="Transp_IS110-like_N"/>
</dbReference>
<dbReference type="InterPro" id="IPR047650">
    <property type="entry name" value="Transpos_IS110"/>
</dbReference>
<dbReference type="InterPro" id="IPR003346">
    <property type="entry name" value="Transposase_20"/>
</dbReference>
<dbReference type="NCBIfam" id="NF033542">
    <property type="entry name" value="transpos_IS110"/>
    <property type="match status" value="1"/>
</dbReference>
<dbReference type="PANTHER" id="PTHR33055:SF3">
    <property type="entry name" value="PUTATIVE TRANSPOSASE FOR IS117-RELATED"/>
    <property type="match status" value="1"/>
</dbReference>
<dbReference type="PANTHER" id="PTHR33055">
    <property type="entry name" value="TRANSPOSASE FOR INSERTION SEQUENCE ELEMENT IS1111A"/>
    <property type="match status" value="1"/>
</dbReference>
<dbReference type="Pfam" id="PF01548">
    <property type="entry name" value="DEDD_Tnp_IS110"/>
    <property type="match status" value="1"/>
</dbReference>
<dbReference type="Pfam" id="PF02371">
    <property type="entry name" value="Transposase_20"/>
    <property type="match status" value="1"/>
</dbReference>
<organism>
    <name type="scientific">Streptomyces coelicolor (strain ATCC BAA-471 / A3(2) / M145)</name>
    <dbReference type="NCBI Taxonomy" id="100226"/>
    <lineage>
        <taxon>Bacteria</taxon>
        <taxon>Bacillati</taxon>
        <taxon>Actinomycetota</taxon>
        <taxon>Actinomycetes</taxon>
        <taxon>Kitasatosporales</taxon>
        <taxon>Streptomycetaceae</taxon>
        <taxon>Streptomyces</taxon>
        <taxon>Streptomyces albidoflavus group</taxon>
    </lineage>
</organism>
<gene>
    <name type="ordered locus">SCO1005</name>
    <name type="ORF">2SCG2.18</name>
</gene>
<gene>
    <name type="ordered locus">SCO2759</name>
    <name type="ORF">SCC57A.30c</name>
</gene>
<gene>
    <name type="ordered locus">SCO6391</name>
    <name type="ORF">SC3C8.10</name>
</gene>
<gene>
    <name type="ordered locus">SCO7782</name>
    <name type="ORF">SC5E9.30</name>
</gene>
<protein>
    <recommendedName>
        <fullName>Insertion element IS110 uncharacterized 43.6 kDa protein</fullName>
    </recommendedName>
</protein>
<sequence length="405" mass="43563">MFDTEDVGVFLGLDVGKTAHHGHGLTPAGKKVLDKQLPNSEPRLRAVFDKLAAKFGTVLVIVDQPASIGALPLTVARDAGCKVAYLPGLAMRRIADLYPGEAKTDAKDAAVIADAARTMAHTLRSLELTDEITAELSVLVGFDQDLAAEATRTSNRIRGLLTQFHPSLERVLGPRLDHQAVTWLLERYGSPAALRKAGRRRLVELVRPKAPRMAQRLIDDIFDALDEQTVVVPGTGTLDIVVPSLASSLTAVHEQRRALEAQINALLEAHPLSPVLTSMPGVGVRTAAVLLVTVGDGTSFPTAAHLASYAGLAPTTKSSGTSIHGEHAPRGGNRQLKRAMFLSAFACMNADPASRTYYDRQRARGKTHTQALLRLARQRISVLFAMLRDGTFYESRMPAGVELAA</sequence>
<accession>P19780</accession>